<name>MUKB_SALAR</name>
<dbReference type="EMBL" id="CP000880">
    <property type="protein sequence ID" value="ABX21849.1"/>
    <property type="molecule type" value="Genomic_DNA"/>
</dbReference>
<dbReference type="SMR" id="A9MHV9"/>
<dbReference type="STRING" id="41514.SARI_01968"/>
<dbReference type="KEGG" id="ses:SARI_01968"/>
<dbReference type="HOGENOM" id="CLU_004430_0_0_6"/>
<dbReference type="Proteomes" id="UP000002084">
    <property type="component" value="Chromosome"/>
</dbReference>
<dbReference type="GO" id="GO:0005737">
    <property type="term" value="C:cytoplasm"/>
    <property type="evidence" value="ECO:0007669"/>
    <property type="project" value="UniProtKB-UniRule"/>
</dbReference>
<dbReference type="GO" id="GO:0009295">
    <property type="term" value="C:nucleoid"/>
    <property type="evidence" value="ECO:0007669"/>
    <property type="project" value="UniProtKB-SubCell"/>
</dbReference>
<dbReference type="GO" id="GO:0005524">
    <property type="term" value="F:ATP binding"/>
    <property type="evidence" value="ECO:0007669"/>
    <property type="project" value="UniProtKB-UniRule"/>
</dbReference>
<dbReference type="GO" id="GO:0003677">
    <property type="term" value="F:DNA binding"/>
    <property type="evidence" value="ECO:0007669"/>
    <property type="project" value="UniProtKB-UniRule"/>
</dbReference>
<dbReference type="GO" id="GO:0051301">
    <property type="term" value="P:cell division"/>
    <property type="evidence" value="ECO:0007669"/>
    <property type="project" value="UniProtKB-KW"/>
</dbReference>
<dbReference type="GO" id="GO:0030261">
    <property type="term" value="P:chromosome condensation"/>
    <property type="evidence" value="ECO:0007669"/>
    <property type="project" value="UniProtKB-KW"/>
</dbReference>
<dbReference type="GO" id="GO:0007059">
    <property type="term" value="P:chromosome segregation"/>
    <property type="evidence" value="ECO:0007669"/>
    <property type="project" value="UniProtKB-UniRule"/>
</dbReference>
<dbReference type="GO" id="GO:0006260">
    <property type="term" value="P:DNA replication"/>
    <property type="evidence" value="ECO:0007669"/>
    <property type="project" value="UniProtKB-UniRule"/>
</dbReference>
<dbReference type="FunFam" id="3.30.70.3500:FF:000001">
    <property type="entry name" value="Chromosome partition protein MukB"/>
    <property type="match status" value="1"/>
</dbReference>
<dbReference type="FunFam" id="3.40.1140.10:FF:000001">
    <property type="entry name" value="Chromosome partition protein MukB"/>
    <property type="match status" value="1"/>
</dbReference>
<dbReference type="FunFam" id="3.40.1140.10:FF:000002">
    <property type="entry name" value="Chromosome partition protein MukB"/>
    <property type="match status" value="1"/>
</dbReference>
<dbReference type="Gene3D" id="1.10.287.1490">
    <property type="match status" value="1"/>
</dbReference>
<dbReference type="Gene3D" id="1.20.58.850">
    <property type="match status" value="1"/>
</dbReference>
<dbReference type="Gene3D" id="3.40.1140.10">
    <property type="match status" value="2"/>
</dbReference>
<dbReference type="Gene3D" id="1.20.5.420">
    <property type="entry name" value="Immunoglobulin FC, subunit C"/>
    <property type="match status" value="1"/>
</dbReference>
<dbReference type="Gene3D" id="3.30.70.3500">
    <property type="entry name" value="MukB, hinge domain"/>
    <property type="match status" value="1"/>
</dbReference>
<dbReference type="HAMAP" id="MF_01800">
    <property type="entry name" value="MukB"/>
    <property type="match status" value="1"/>
</dbReference>
<dbReference type="InterPro" id="IPR012090">
    <property type="entry name" value="MukB"/>
</dbReference>
<dbReference type="InterPro" id="IPR050308">
    <property type="entry name" value="MukB/SMC"/>
</dbReference>
<dbReference type="InterPro" id="IPR032520">
    <property type="entry name" value="MukB_hinge"/>
</dbReference>
<dbReference type="InterPro" id="IPR042501">
    <property type="entry name" value="MukB_hinge_sf"/>
</dbReference>
<dbReference type="InterPro" id="IPR007406">
    <property type="entry name" value="MukB_N_dom"/>
</dbReference>
<dbReference type="InterPro" id="IPR027417">
    <property type="entry name" value="P-loop_NTPase"/>
</dbReference>
<dbReference type="NCBIfam" id="NF003422">
    <property type="entry name" value="PRK04863.1"/>
    <property type="match status" value="1"/>
</dbReference>
<dbReference type="PANTHER" id="PTHR42963">
    <property type="entry name" value="CHROMOSOME PARTITION PROTEIN MUKB"/>
    <property type="match status" value="1"/>
</dbReference>
<dbReference type="PANTHER" id="PTHR42963:SF1">
    <property type="entry name" value="DUF4476 DOMAIN-CONTAINING PROTEIN"/>
    <property type="match status" value="1"/>
</dbReference>
<dbReference type="Pfam" id="PF04310">
    <property type="entry name" value="MukB"/>
    <property type="match status" value="1"/>
</dbReference>
<dbReference type="Pfam" id="PF16330">
    <property type="entry name" value="MukB_hinge"/>
    <property type="match status" value="1"/>
</dbReference>
<dbReference type="Pfam" id="PF13558">
    <property type="entry name" value="SbcC_Walker_B"/>
    <property type="match status" value="1"/>
</dbReference>
<dbReference type="PIRSF" id="PIRSF005246">
    <property type="entry name" value="MukB"/>
    <property type="match status" value="1"/>
</dbReference>
<dbReference type="SUPFAM" id="SSF52540">
    <property type="entry name" value="P-loop containing nucleoside triphosphate hydrolases"/>
    <property type="match status" value="2"/>
</dbReference>
<reference key="1">
    <citation type="submission" date="2007-11" db="EMBL/GenBank/DDBJ databases">
        <authorList>
            <consortium name="The Salmonella enterica serovar Arizonae Genome Sequencing Project"/>
            <person name="McClelland M."/>
            <person name="Sanderson E.K."/>
            <person name="Porwollik S."/>
            <person name="Spieth J."/>
            <person name="Clifton W.S."/>
            <person name="Fulton R."/>
            <person name="Chunyan W."/>
            <person name="Wollam A."/>
            <person name="Shah N."/>
            <person name="Pepin K."/>
            <person name="Bhonagiri V."/>
            <person name="Nash W."/>
            <person name="Johnson M."/>
            <person name="Thiruvilangam P."/>
            <person name="Wilson R."/>
        </authorList>
    </citation>
    <scope>NUCLEOTIDE SEQUENCE [LARGE SCALE GENOMIC DNA]</scope>
    <source>
        <strain>ATCC BAA-731 / CDC346-86 / RSK2980</strain>
    </source>
</reference>
<comment type="function">
    <text evidence="1">Plays a central role in chromosome condensation, segregation and cell cycle progression. Functions as a homodimer, which is essential for chromosome partition. Involved in negative DNA supercoiling in vivo, and by this means organize and compact chromosomes. May achieve or facilitate chromosome segregation by condensation DNA from both sides of a centrally located replisome during cell division.</text>
</comment>
<comment type="subunit">
    <text evidence="1">Homodimerization via its hinge domain. Binds to DNA via its C-terminal region. Interacts, and probably forms a ternary complex, with MukE and MukF via its C-terminal region. The complex formation is stimulated by calcium or magnesium. Interacts with tubulin-related protein FtsZ.</text>
</comment>
<comment type="subcellular location">
    <subcellularLocation>
        <location evidence="1">Cytoplasm</location>
        <location evidence="1">Nucleoid</location>
    </subcellularLocation>
    <text evidence="1">Restricted to the nucleoid region.</text>
</comment>
<comment type="domain">
    <text evidence="1">The hinge domain, which separates the large intramolecular coiled coil regions, allows the homodimerization, forming a V-shaped homodimer.</text>
</comment>
<comment type="similarity">
    <text evidence="1">Belongs to the SMC family. MukB subfamily.</text>
</comment>
<accession>A9MHV9</accession>
<feature type="chain" id="PRO_1000088220" description="Chromosome partition protein MukB">
    <location>
        <begin position="1"/>
        <end position="1488"/>
    </location>
</feature>
<feature type="region of interest" description="Flexible hinge" evidence="1">
    <location>
        <begin position="666"/>
        <end position="783"/>
    </location>
</feature>
<feature type="region of interest" description="Disordered" evidence="2">
    <location>
        <begin position="1049"/>
        <end position="1074"/>
    </location>
</feature>
<feature type="coiled-coil region" evidence="1">
    <location>
        <begin position="326"/>
        <end position="418"/>
    </location>
</feature>
<feature type="coiled-coil region" evidence="1">
    <location>
        <begin position="444"/>
        <end position="472"/>
    </location>
</feature>
<feature type="coiled-coil region" evidence="1">
    <location>
        <begin position="509"/>
        <end position="602"/>
    </location>
</feature>
<feature type="coiled-coil region" evidence="1">
    <location>
        <begin position="835"/>
        <end position="923"/>
    </location>
</feature>
<feature type="coiled-coil region" evidence="1">
    <location>
        <begin position="977"/>
        <end position="1116"/>
    </location>
</feature>
<feature type="coiled-coil region" evidence="1">
    <location>
        <begin position="1209"/>
        <end position="1265"/>
    </location>
</feature>
<feature type="compositionally biased region" description="Basic and acidic residues" evidence="2">
    <location>
        <begin position="1051"/>
        <end position="1065"/>
    </location>
</feature>
<feature type="binding site" evidence="1">
    <location>
        <begin position="34"/>
        <end position="41"/>
    </location>
    <ligand>
        <name>ATP</name>
        <dbReference type="ChEBI" id="CHEBI:30616"/>
    </ligand>
</feature>
<protein>
    <recommendedName>
        <fullName evidence="1">Chromosome partition protein MukB</fullName>
    </recommendedName>
    <alternativeName>
        <fullName evidence="1">Structural maintenance of chromosome-related protein</fullName>
    </alternativeName>
</protein>
<proteinExistence type="inferred from homology"/>
<organism>
    <name type="scientific">Salmonella arizonae (strain ATCC BAA-731 / CDC346-86 / RSK2980)</name>
    <dbReference type="NCBI Taxonomy" id="41514"/>
    <lineage>
        <taxon>Bacteria</taxon>
        <taxon>Pseudomonadati</taxon>
        <taxon>Pseudomonadota</taxon>
        <taxon>Gammaproteobacteria</taxon>
        <taxon>Enterobacterales</taxon>
        <taxon>Enterobacteriaceae</taxon>
        <taxon>Salmonella</taxon>
    </lineage>
</organism>
<keyword id="KW-0067">ATP-binding</keyword>
<keyword id="KW-0131">Cell cycle</keyword>
<keyword id="KW-0132">Cell division</keyword>
<keyword id="KW-0159">Chromosome partition</keyword>
<keyword id="KW-0175">Coiled coil</keyword>
<keyword id="KW-0963">Cytoplasm</keyword>
<keyword id="KW-0226">DNA condensation</keyword>
<keyword id="KW-0238">DNA-binding</keyword>
<keyword id="KW-0547">Nucleotide-binding</keyword>
<keyword id="KW-1185">Reference proteome</keyword>
<evidence type="ECO:0000255" key="1">
    <source>
        <dbReference type="HAMAP-Rule" id="MF_01800"/>
    </source>
</evidence>
<evidence type="ECO:0000256" key="2">
    <source>
        <dbReference type="SAM" id="MobiDB-lite"/>
    </source>
</evidence>
<gene>
    <name evidence="1" type="primary">mukB</name>
    <name type="ordered locus">SARI_01968</name>
</gene>
<sequence length="1488" mass="170020">MIERGKFRSLTLINWNGFFARTFDLDELVTTLSGGNGAGKSTTMAAFVTALIPDLTLLHFRNTTEAGATSGSRDKGLHGKLKAGVCYSMLDTINSRHQRVVVGVRLQQVAGRDRKVDIKPFAIQGLPMSVQPTQLVTETLNERQARVLSLAELKDKLDEMEGVQFKQFNSITDYHSLMFDLGIIARRLRSASDRSKFYRLIEASLYGGISSAITRSLRDYLLPENSGVRKAFQDMEAALRENRLTLEAIRVTQSDRDLFKHLISEATDYVAADYMRHANERRVHLDQALAFRRELYTSRKQLAAEQYKHVDMARELGEHNGAEGSLEADYQAASDHLNLVQTALRQQEKIERYEADLEELQIRLEEQNEVVAEAAEMQEENEARAEAAELEVDELKSQLADYQQALDVQQTRAIQYNQAISALARARELCHLPDLTPESAAEWLDTFQAKEQEATEKLLSLEQKMSVAQTAHSQFEQAYQLVAAINGPLARGEAWDVARELLRDGVNQRHLAEQVQPLRMRLSELEQRLREQQEAERLLAEFCKRQGKNFDIDELEALHQELEARIAALSDSVANASEQRLALRQEQEQLQSRIQHLMQRAPVWLAAQNSLNQLSEQCGEAFSSSQEVTEYLQQLLEREREAIVERDEVGARKNAVDEEIERLSQPGGAEDQRLNTLAERFGGVLLSEIYDDVSLEDAPYFSALYGPSRHAIVVPDLSQIAEQLEGLTDCPEDLYLIEGDPQSFDDSVFSVDELEKAVVVKIADRQWRYSRFPSLPIFGRAARENRIESLHAEREVLSERFATLSFDVQKTQRLHQAFSRFIGSHLSVAFEDDPEAEIRRLNGRRVELERALATHENDNQQQRLQFEQAKEGVSALNRLLPRLNLLADETLADRVDEIQERLDEAQEAARFVQQYGNQLAKLEPVVSVLQSDPEQFEQLKEDYAWSQQMQRDARQQAFALAEVVERRAHFSYSDSAEMLSGNSDLNEKLRQRLEQAEAERTRAREALRSHASQLSQYSQVLASLKSSYDTKKELLNDLQRELQDIGVRADSGAEERARQRRDELHAQLSNNRSRRNQLEKALTFCEAEMDNLTRKLRKLERDYHEMREQVVTAKAGWCAVMRMVKDNGVERRLHRRELAYLSADELRSMSDKALGALRLAVADNEHLRDVLRLSEDPKRPERKIQFFVAVYQHLRERIRQDIIRTDDPVEAIEQMEIELSRLTEELTSREQKLAISSRSVANIIRKTIQREQNRIRMLNQGLQSVSFGQVNSVRLNVNVRETHATLLDVLSEQQEQHQDLFNSNRLTFSEALAKLYQRLNPQIDMGQRTPQTIGEELLDYRNYLEMEVEVNRGSDGWLRAESGALSTGEAIGTGMSILVMVVQSWEDEARRLRGKDISPCRLLFLDEAARLDARSIATLFELCERLQMQLIIAAPENISPEKGTTYKLVRKVFQNTEHVHVVGLRGFAPQLPETLPGTQTEDTPSEAS</sequence>